<sequence>MLKDVQNERDNRNIYLKRVGVKDLRYPIVVLDRTNVTQNTIATLNMFVDLPKDYRGTHMSRFIEVLNEYHLEINPKRIKEILRSLKKVLNAKRSVIEITFPFFLLKKAPVTGSESYLEYTCSFEAEMNGDHLDFSTTVTAPIHTLCPCSKEISEYGAHNQRAKCSVTFKSKEMVWIEDIIEIIEESASAPIFTLLKRADEKYVTEHAYDNPKFVEDVARDVALRLKKYDKIEWYKVEVESFESIHAHNAYACLTSDEIEKI</sequence>
<reference key="1">
    <citation type="submission" date="2007-07" db="EMBL/GenBank/DDBJ databases">
        <title>Complete sequence of Fervidobacterium nodosum Rt17-B1.</title>
        <authorList>
            <consortium name="US DOE Joint Genome Institute"/>
            <person name="Copeland A."/>
            <person name="Lucas S."/>
            <person name="Lapidus A."/>
            <person name="Barry K."/>
            <person name="Glavina del Rio T."/>
            <person name="Dalin E."/>
            <person name="Tice H."/>
            <person name="Pitluck S."/>
            <person name="Saunders E."/>
            <person name="Brettin T."/>
            <person name="Bruce D."/>
            <person name="Detter J.C."/>
            <person name="Han C."/>
            <person name="Schmutz J."/>
            <person name="Larimer F."/>
            <person name="Land M."/>
            <person name="Hauser L."/>
            <person name="Kyrpides N."/>
            <person name="Mikhailova N."/>
            <person name="Nelson K."/>
            <person name="Gogarten J.P."/>
            <person name="Noll K."/>
            <person name="Richardson P."/>
        </authorList>
    </citation>
    <scope>NUCLEOTIDE SEQUENCE [LARGE SCALE GENOMIC DNA]</scope>
    <source>
        <strain>ATCC 35602 / DSM 5306 / Rt17-B1</strain>
    </source>
</reference>
<organism>
    <name type="scientific">Fervidobacterium nodosum (strain ATCC 35602 / DSM 5306 / Rt17-B1)</name>
    <dbReference type="NCBI Taxonomy" id="381764"/>
    <lineage>
        <taxon>Bacteria</taxon>
        <taxon>Thermotogati</taxon>
        <taxon>Thermotogota</taxon>
        <taxon>Thermotogae</taxon>
        <taxon>Thermotogales</taxon>
        <taxon>Fervidobacteriaceae</taxon>
        <taxon>Fervidobacterium</taxon>
    </lineage>
</organism>
<name>GCH4_FERNB</name>
<accession>A7HKP2</accession>
<comment type="function">
    <text evidence="1">Converts GTP to 7,8-dihydroneopterin triphosphate.</text>
</comment>
<comment type="catalytic activity">
    <reaction evidence="1">
        <text>GTP + H2O = 7,8-dihydroneopterin 3'-triphosphate + formate + H(+)</text>
        <dbReference type="Rhea" id="RHEA:17473"/>
        <dbReference type="ChEBI" id="CHEBI:15377"/>
        <dbReference type="ChEBI" id="CHEBI:15378"/>
        <dbReference type="ChEBI" id="CHEBI:15740"/>
        <dbReference type="ChEBI" id="CHEBI:37565"/>
        <dbReference type="ChEBI" id="CHEBI:58462"/>
        <dbReference type="EC" id="3.5.4.16"/>
    </reaction>
</comment>
<comment type="pathway">
    <text evidence="1">Cofactor biosynthesis; 7,8-dihydroneopterin triphosphate biosynthesis; 7,8-dihydroneopterin triphosphate from GTP: step 1/1.</text>
</comment>
<comment type="similarity">
    <text evidence="1">Belongs to the GTP cyclohydrolase IV family.</text>
</comment>
<proteinExistence type="inferred from homology"/>
<evidence type="ECO:0000255" key="1">
    <source>
        <dbReference type="HAMAP-Rule" id="MF_01527"/>
    </source>
</evidence>
<dbReference type="EC" id="3.5.4.16" evidence="1"/>
<dbReference type="EMBL" id="CP000771">
    <property type="protein sequence ID" value="ABS60475.1"/>
    <property type="molecule type" value="Genomic_DNA"/>
</dbReference>
<dbReference type="SMR" id="A7HKP2"/>
<dbReference type="STRING" id="381764.Fnod_0620"/>
<dbReference type="KEGG" id="fno:Fnod_0620"/>
<dbReference type="eggNOG" id="COG1469">
    <property type="taxonomic scope" value="Bacteria"/>
</dbReference>
<dbReference type="HOGENOM" id="CLU_062816_1_1_0"/>
<dbReference type="UniPathway" id="UPA00848">
    <property type="reaction ID" value="UER00151"/>
</dbReference>
<dbReference type="Proteomes" id="UP000002415">
    <property type="component" value="Chromosome"/>
</dbReference>
<dbReference type="GO" id="GO:0003934">
    <property type="term" value="F:GTP cyclohydrolase I activity"/>
    <property type="evidence" value="ECO:0007669"/>
    <property type="project" value="UniProtKB-UniRule"/>
</dbReference>
<dbReference type="GO" id="GO:0046654">
    <property type="term" value="P:tetrahydrofolate biosynthetic process"/>
    <property type="evidence" value="ECO:0007669"/>
    <property type="project" value="UniProtKB-UniRule"/>
</dbReference>
<dbReference type="Gene3D" id="3.10.270.10">
    <property type="entry name" value="Urate Oxidase"/>
    <property type="match status" value="1"/>
</dbReference>
<dbReference type="HAMAP" id="MF_01527_B">
    <property type="entry name" value="GTP_cyclohydrol_B"/>
    <property type="match status" value="1"/>
</dbReference>
<dbReference type="InterPro" id="IPR022838">
    <property type="entry name" value="GTP_cyclohydrolase_FolE2"/>
</dbReference>
<dbReference type="InterPro" id="IPR003801">
    <property type="entry name" value="GTP_cyclohydrolase_FolE2/MptA"/>
</dbReference>
<dbReference type="NCBIfam" id="NF010200">
    <property type="entry name" value="PRK13674.1-1"/>
    <property type="match status" value="1"/>
</dbReference>
<dbReference type="PANTHER" id="PTHR36445">
    <property type="entry name" value="GTP CYCLOHYDROLASE MPTA"/>
    <property type="match status" value="1"/>
</dbReference>
<dbReference type="PANTHER" id="PTHR36445:SF1">
    <property type="entry name" value="GTP CYCLOHYDROLASE MPTA"/>
    <property type="match status" value="1"/>
</dbReference>
<dbReference type="Pfam" id="PF02649">
    <property type="entry name" value="GCHY-1"/>
    <property type="match status" value="1"/>
</dbReference>
<gene>
    <name evidence="1" type="primary">folE2</name>
    <name type="ordered locus">Fnod_0620</name>
</gene>
<feature type="chain" id="PRO_0000372029" description="GTP cyclohydrolase FolE2">
    <location>
        <begin position="1"/>
        <end position="261"/>
    </location>
</feature>
<feature type="site" description="May be catalytically important" evidence="1">
    <location>
        <position position="146"/>
    </location>
</feature>
<protein>
    <recommendedName>
        <fullName evidence="1">GTP cyclohydrolase FolE2</fullName>
        <ecNumber evidence="1">3.5.4.16</ecNumber>
    </recommendedName>
</protein>
<keyword id="KW-0378">Hydrolase</keyword>
<keyword id="KW-1185">Reference proteome</keyword>